<comment type="function">
    <text evidence="1">The RuvA-RuvB-RuvC complex processes Holliday junction (HJ) DNA during genetic recombination and DNA repair, while the RuvA-RuvB complex plays an important role in the rescue of blocked DNA replication forks via replication fork reversal (RFR). RuvA specifically binds to HJ cruciform DNA, conferring on it an open structure. The RuvB hexamer acts as an ATP-dependent pump, pulling dsDNA into and through the RuvAB complex. HJ branch migration allows RuvC to scan DNA until it finds its consensus sequence, where it cleaves and resolves the cruciform DNA.</text>
</comment>
<comment type="subunit">
    <text evidence="1">Homotetramer. Forms an RuvA(8)-RuvB(12)-Holliday junction (HJ) complex. HJ DNA is sandwiched between 2 RuvA tetramers; dsDNA enters through RuvA and exits via RuvB. An RuvB hexamer assembles on each DNA strand where it exits the tetramer. Each RuvB hexamer is contacted by two RuvA subunits (via domain III) on 2 adjacent RuvB subunits; this complex drives branch migration. In the full resolvosome a probable DNA-RuvA(4)-RuvB(12)-RuvC(2) complex forms which resolves the HJ.</text>
</comment>
<comment type="subcellular location">
    <subcellularLocation>
        <location evidence="1">Cytoplasm</location>
    </subcellularLocation>
</comment>
<comment type="domain">
    <text evidence="1">Has three domains with a flexible linker between the domains II and III and assumes an 'L' shape. Domain III is highly mobile and contacts RuvB.</text>
</comment>
<comment type="similarity">
    <text evidence="1">Belongs to the RuvA family.</text>
</comment>
<accession>B0SGZ5</accession>
<dbReference type="EMBL" id="CP000777">
    <property type="protein sequence ID" value="ABZ93962.1"/>
    <property type="molecule type" value="Genomic_DNA"/>
</dbReference>
<dbReference type="RefSeq" id="WP_012388487.1">
    <property type="nucleotide sequence ID" value="NC_010842.1"/>
</dbReference>
<dbReference type="SMR" id="B0SGZ5"/>
<dbReference type="KEGG" id="lbf:LBF_1447"/>
<dbReference type="HOGENOM" id="CLU_087936_3_1_12"/>
<dbReference type="GO" id="GO:0005737">
    <property type="term" value="C:cytoplasm"/>
    <property type="evidence" value="ECO:0007669"/>
    <property type="project" value="UniProtKB-SubCell"/>
</dbReference>
<dbReference type="GO" id="GO:0009379">
    <property type="term" value="C:Holliday junction helicase complex"/>
    <property type="evidence" value="ECO:0007669"/>
    <property type="project" value="InterPro"/>
</dbReference>
<dbReference type="GO" id="GO:0048476">
    <property type="term" value="C:Holliday junction resolvase complex"/>
    <property type="evidence" value="ECO:0007669"/>
    <property type="project" value="UniProtKB-UniRule"/>
</dbReference>
<dbReference type="GO" id="GO:0005524">
    <property type="term" value="F:ATP binding"/>
    <property type="evidence" value="ECO:0007669"/>
    <property type="project" value="InterPro"/>
</dbReference>
<dbReference type="GO" id="GO:0000400">
    <property type="term" value="F:four-way junction DNA binding"/>
    <property type="evidence" value="ECO:0007669"/>
    <property type="project" value="UniProtKB-UniRule"/>
</dbReference>
<dbReference type="GO" id="GO:0009378">
    <property type="term" value="F:four-way junction helicase activity"/>
    <property type="evidence" value="ECO:0007669"/>
    <property type="project" value="InterPro"/>
</dbReference>
<dbReference type="GO" id="GO:0006310">
    <property type="term" value="P:DNA recombination"/>
    <property type="evidence" value="ECO:0007669"/>
    <property type="project" value="UniProtKB-UniRule"/>
</dbReference>
<dbReference type="GO" id="GO:0006281">
    <property type="term" value="P:DNA repair"/>
    <property type="evidence" value="ECO:0007669"/>
    <property type="project" value="UniProtKB-UniRule"/>
</dbReference>
<dbReference type="CDD" id="cd14332">
    <property type="entry name" value="UBA_RuvA_C"/>
    <property type="match status" value="1"/>
</dbReference>
<dbReference type="Gene3D" id="1.10.150.20">
    <property type="entry name" value="5' to 3' exonuclease, C-terminal subdomain"/>
    <property type="match status" value="1"/>
</dbReference>
<dbReference type="Gene3D" id="1.10.8.10">
    <property type="entry name" value="DNA helicase RuvA subunit, C-terminal domain"/>
    <property type="match status" value="1"/>
</dbReference>
<dbReference type="Gene3D" id="2.40.50.140">
    <property type="entry name" value="Nucleic acid-binding proteins"/>
    <property type="match status" value="1"/>
</dbReference>
<dbReference type="HAMAP" id="MF_00031">
    <property type="entry name" value="DNA_HJ_migration_RuvA"/>
    <property type="match status" value="1"/>
</dbReference>
<dbReference type="InterPro" id="IPR013849">
    <property type="entry name" value="DNA_helicase_Holl-junc_RuvA_I"/>
</dbReference>
<dbReference type="InterPro" id="IPR012340">
    <property type="entry name" value="NA-bd_OB-fold"/>
</dbReference>
<dbReference type="InterPro" id="IPR000085">
    <property type="entry name" value="RuvA"/>
</dbReference>
<dbReference type="InterPro" id="IPR010994">
    <property type="entry name" value="RuvA_2-like"/>
</dbReference>
<dbReference type="InterPro" id="IPR011114">
    <property type="entry name" value="RuvA_C"/>
</dbReference>
<dbReference type="InterPro" id="IPR036267">
    <property type="entry name" value="RuvA_C_sf"/>
</dbReference>
<dbReference type="NCBIfam" id="TIGR00084">
    <property type="entry name" value="ruvA"/>
    <property type="match status" value="1"/>
</dbReference>
<dbReference type="Pfam" id="PF14520">
    <property type="entry name" value="HHH_5"/>
    <property type="match status" value="1"/>
</dbReference>
<dbReference type="Pfam" id="PF01330">
    <property type="entry name" value="RuvA_N"/>
    <property type="match status" value="1"/>
</dbReference>
<dbReference type="SUPFAM" id="SSF46929">
    <property type="entry name" value="DNA helicase RuvA subunit, C-terminal domain"/>
    <property type="match status" value="1"/>
</dbReference>
<dbReference type="SUPFAM" id="SSF50249">
    <property type="entry name" value="Nucleic acid-binding proteins"/>
    <property type="match status" value="1"/>
</dbReference>
<dbReference type="SUPFAM" id="SSF47781">
    <property type="entry name" value="RuvA domain 2-like"/>
    <property type="match status" value="1"/>
</dbReference>
<gene>
    <name evidence="1" type="primary">ruvA</name>
    <name type="ordered locus">LBF_1447</name>
</gene>
<name>RUVA_LEPBA</name>
<organism>
    <name type="scientific">Leptospira biflexa serovar Patoc (strain Patoc 1 / Ames)</name>
    <dbReference type="NCBI Taxonomy" id="355278"/>
    <lineage>
        <taxon>Bacteria</taxon>
        <taxon>Pseudomonadati</taxon>
        <taxon>Spirochaetota</taxon>
        <taxon>Spirochaetia</taxon>
        <taxon>Leptospirales</taxon>
        <taxon>Leptospiraceae</taxon>
        <taxon>Leptospira</taxon>
    </lineage>
</organism>
<keyword id="KW-0963">Cytoplasm</keyword>
<keyword id="KW-0227">DNA damage</keyword>
<keyword id="KW-0233">DNA recombination</keyword>
<keyword id="KW-0234">DNA repair</keyword>
<keyword id="KW-0238">DNA-binding</keyword>
<evidence type="ECO:0000255" key="1">
    <source>
        <dbReference type="HAMAP-Rule" id="MF_00031"/>
    </source>
</evidence>
<protein>
    <recommendedName>
        <fullName evidence="1">Holliday junction branch migration complex subunit RuvA</fullName>
    </recommendedName>
</protein>
<proteinExistence type="inferred from homology"/>
<reference key="1">
    <citation type="journal article" date="2008" name="PLoS ONE">
        <title>Genome sequence of the saprophyte Leptospira biflexa provides insights into the evolution of Leptospira and the pathogenesis of leptospirosis.</title>
        <authorList>
            <person name="Picardeau M."/>
            <person name="Bulach D.M."/>
            <person name="Bouchier C."/>
            <person name="Zuerner R.L."/>
            <person name="Zidane N."/>
            <person name="Wilson P.J."/>
            <person name="Creno S."/>
            <person name="Kuczek E.S."/>
            <person name="Bommezzadri S."/>
            <person name="Davis J.C."/>
            <person name="McGrath A."/>
            <person name="Johnson M.J."/>
            <person name="Boursaux-Eude C."/>
            <person name="Seemann T."/>
            <person name="Rouy Z."/>
            <person name="Coppel R.L."/>
            <person name="Rood J.I."/>
            <person name="Lajus A."/>
            <person name="Davies J.K."/>
            <person name="Medigue C."/>
            <person name="Adler B."/>
        </authorList>
    </citation>
    <scope>NUCLEOTIDE SEQUENCE [LARGE SCALE GENOMIC DNA]</scope>
    <source>
        <strain>Patoc 1 / Ames</strain>
    </source>
</reference>
<feature type="chain" id="PRO_1000090331" description="Holliday junction branch migration complex subunit RuvA">
    <location>
        <begin position="1"/>
        <end position="199"/>
    </location>
</feature>
<feature type="region of interest" description="Domain I" evidence="1">
    <location>
        <begin position="1"/>
        <end position="65"/>
    </location>
</feature>
<feature type="region of interest" description="Domain II" evidence="1">
    <location>
        <begin position="66"/>
        <end position="144"/>
    </location>
</feature>
<feature type="region of interest" description="Flexible linker" evidence="1">
    <location>
        <begin position="145"/>
        <end position="155"/>
    </location>
</feature>
<feature type="region of interest" description="Domain III" evidence="1">
    <location>
        <begin position="155"/>
        <end position="199"/>
    </location>
</feature>
<sequence length="199" mass="22393">MIASLRGKLLQLEIDRLVVEVSGVGYEVMIPFPLHLECKDKLNTEIYIHTFHSITDRGQRLFGFGSKKDRESFELIKSLHGIGELTALKILSFFQADDLYQIAKADDKKTLEKIPKVKGKTSEKILFEIKQNLKKFEMFLNEGTTESSFVDRETDLATLALIQLGFDEKSATKQVADAKKLNPGLSASDIVKQVITGTR</sequence>